<comment type="function">
    <text evidence="5">Probable substrate-recognition component of the SCF (SKP1-CUL1-F-box protein)-type E3 ubiquitin ligase complex that may function in myogenesis.</text>
</comment>
<comment type="subunit">
    <text evidence="1">Directly interacts with SKP1 and CUL1.</text>
</comment>
<comment type="subcellular location">
    <subcellularLocation>
        <location evidence="5">Cytoplasm</location>
    </subcellularLocation>
</comment>
<comment type="tissue specificity">
    <text evidence="5">Expressed only in heart and skeletal muscle.</text>
</comment>
<comment type="developmental stage">
    <text evidence="5">During the development of skeletal muscle, can only be detected 2 weeks after birth.</text>
</comment>
<comment type="sequence caution" evidence="6">
    <conflict type="frameshift">
        <sequence resource="EMBL" id="AK036385"/>
    </conflict>
</comment>
<evidence type="ECO:0000250" key="1"/>
<evidence type="ECO:0000255" key="2">
    <source>
        <dbReference type="PROSITE-ProRule" id="PRU00080"/>
    </source>
</evidence>
<evidence type="ECO:0000255" key="3">
    <source>
        <dbReference type="PROSITE-ProRule" id="PRU00207"/>
    </source>
</evidence>
<evidence type="ECO:0000256" key="4">
    <source>
        <dbReference type="SAM" id="MobiDB-lite"/>
    </source>
</evidence>
<evidence type="ECO:0000269" key="5">
    <source>
    </source>
</evidence>
<evidence type="ECO:0000305" key="6"/>
<accession>P62932</accession>
<protein>
    <recommendedName>
        <fullName>F-box only protein 40</fullName>
    </recommendedName>
</protein>
<name>FBX40_MOUSE</name>
<proteinExistence type="evidence at protein level"/>
<organism>
    <name type="scientific">Mus musculus</name>
    <name type="common">Mouse</name>
    <dbReference type="NCBI Taxonomy" id="10090"/>
    <lineage>
        <taxon>Eukaryota</taxon>
        <taxon>Metazoa</taxon>
        <taxon>Chordata</taxon>
        <taxon>Craniata</taxon>
        <taxon>Vertebrata</taxon>
        <taxon>Euteleostomi</taxon>
        <taxon>Mammalia</taxon>
        <taxon>Eutheria</taxon>
        <taxon>Euarchontoglires</taxon>
        <taxon>Glires</taxon>
        <taxon>Rodentia</taxon>
        <taxon>Myomorpha</taxon>
        <taxon>Muroidea</taxon>
        <taxon>Muridae</taxon>
        <taxon>Murinae</taxon>
        <taxon>Mus</taxon>
        <taxon>Mus</taxon>
    </lineage>
</organism>
<sequence>MGRARKPPPALHRHCEGCFNRHCHVPVEPSVSCLVISCHLLCGATFHMCKESEHTLLCPLEQVPCLNSEYGCPLSMARHKLAKHLQVCPASVVCCSMEWIRWPNVDSETFLHENIMKETPSEECLDTALALQDQKVLFRSLKMVELFPETRDATEEEPDMNGDTSWEETGGAVGGVDARLAPNSCLPATSRQMMELSQEERDALAKTKEGMDLDKFGKWESMFSKEHAASVLTGSLGKSEDKNGDVAGKEQCSSNVRIGDAEGSAERRGPQESQKSQELPATMEMTGLAPWQDGVLERLKTAVDAKDYNMYLVHNGRMLIHFGQMPACTPKERDFVYGNLEAQEVKTVYTFKIPVSYCGKRARLGDAMLKCRPSEHKAVDTSDLGISVEDLPKSDLIKTTLQCALERELKGHVISESRSIDGLFMDLATQTYNFEPEQFSSETVLADLLGTAQPGGLHVELHSECVTRRHNKSSSAFTFTCNKFFRRDEFPLHFKNVHTDIQSSLDGWFQHRCPLAYLGCTFVQNHFRPPGQKAKVIYSQELKTFAIKPEVAPELSEKWKSDHLSGRDGKSLNSLTSLPLEVLQYIAGFLDSISLSQLSQVSVLMRNICATLLQERGMVLSQWKKKRYSHGGTSWKVHNQIWQFSSLFSKINSWEFNDVTSMSEHLKTCPFNIVERKTDPIRLTSMCQPQEKARESLVSTFRARPRGRHF</sequence>
<feature type="chain" id="PRO_0000119939" description="F-box only protein 40">
    <location>
        <begin position="1"/>
        <end position="710"/>
    </location>
</feature>
<feature type="domain" description="F-box" evidence="2">
    <location>
        <begin position="572"/>
        <end position="626"/>
    </location>
</feature>
<feature type="zinc finger region" description="TRAF-type" evidence="3">
    <location>
        <begin position="53"/>
        <end position="114"/>
    </location>
</feature>
<feature type="region of interest" description="Disordered" evidence="4">
    <location>
        <begin position="152"/>
        <end position="174"/>
    </location>
</feature>
<feature type="region of interest" description="Disordered" evidence="4">
    <location>
        <begin position="234"/>
        <end position="279"/>
    </location>
</feature>
<feature type="compositionally biased region" description="Basic and acidic residues" evidence="4">
    <location>
        <begin position="238"/>
        <end position="248"/>
    </location>
</feature>
<reference key="1">
    <citation type="journal article" date="2005" name="Science">
        <title>The transcriptional landscape of the mammalian genome.</title>
        <authorList>
            <person name="Carninci P."/>
            <person name="Kasukawa T."/>
            <person name="Katayama S."/>
            <person name="Gough J."/>
            <person name="Frith M.C."/>
            <person name="Maeda N."/>
            <person name="Oyama R."/>
            <person name="Ravasi T."/>
            <person name="Lenhard B."/>
            <person name="Wells C."/>
            <person name="Kodzius R."/>
            <person name="Shimokawa K."/>
            <person name="Bajic V.B."/>
            <person name="Brenner S.E."/>
            <person name="Batalov S."/>
            <person name="Forrest A.R."/>
            <person name="Zavolan M."/>
            <person name="Davis M.J."/>
            <person name="Wilming L.G."/>
            <person name="Aidinis V."/>
            <person name="Allen J.E."/>
            <person name="Ambesi-Impiombato A."/>
            <person name="Apweiler R."/>
            <person name="Aturaliya R.N."/>
            <person name="Bailey T.L."/>
            <person name="Bansal M."/>
            <person name="Baxter L."/>
            <person name="Beisel K.W."/>
            <person name="Bersano T."/>
            <person name="Bono H."/>
            <person name="Chalk A.M."/>
            <person name="Chiu K.P."/>
            <person name="Choudhary V."/>
            <person name="Christoffels A."/>
            <person name="Clutterbuck D.R."/>
            <person name="Crowe M.L."/>
            <person name="Dalla E."/>
            <person name="Dalrymple B.P."/>
            <person name="de Bono B."/>
            <person name="Della Gatta G."/>
            <person name="di Bernardo D."/>
            <person name="Down T."/>
            <person name="Engstrom P."/>
            <person name="Fagiolini M."/>
            <person name="Faulkner G."/>
            <person name="Fletcher C.F."/>
            <person name="Fukushima T."/>
            <person name="Furuno M."/>
            <person name="Futaki S."/>
            <person name="Gariboldi M."/>
            <person name="Georgii-Hemming P."/>
            <person name="Gingeras T.R."/>
            <person name="Gojobori T."/>
            <person name="Green R.E."/>
            <person name="Gustincich S."/>
            <person name="Harbers M."/>
            <person name="Hayashi Y."/>
            <person name="Hensch T.K."/>
            <person name="Hirokawa N."/>
            <person name="Hill D."/>
            <person name="Huminiecki L."/>
            <person name="Iacono M."/>
            <person name="Ikeo K."/>
            <person name="Iwama A."/>
            <person name="Ishikawa T."/>
            <person name="Jakt M."/>
            <person name="Kanapin A."/>
            <person name="Katoh M."/>
            <person name="Kawasawa Y."/>
            <person name="Kelso J."/>
            <person name="Kitamura H."/>
            <person name="Kitano H."/>
            <person name="Kollias G."/>
            <person name="Krishnan S.P."/>
            <person name="Kruger A."/>
            <person name="Kummerfeld S.K."/>
            <person name="Kurochkin I.V."/>
            <person name="Lareau L.F."/>
            <person name="Lazarevic D."/>
            <person name="Lipovich L."/>
            <person name="Liu J."/>
            <person name="Liuni S."/>
            <person name="McWilliam S."/>
            <person name="Madan Babu M."/>
            <person name="Madera M."/>
            <person name="Marchionni L."/>
            <person name="Matsuda H."/>
            <person name="Matsuzawa S."/>
            <person name="Miki H."/>
            <person name="Mignone F."/>
            <person name="Miyake S."/>
            <person name="Morris K."/>
            <person name="Mottagui-Tabar S."/>
            <person name="Mulder N."/>
            <person name="Nakano N."/>
            <person name="Nakauchi H."/>
            <person name="Ng P."/>
            <person name="Nilsson R."/>
            <person name="Nishiguchi S."/>
            <person name="Nishikawa S."/>
            <person name="Nori F."/>
            <person name="Ohara O."/>
            <person name="Okazaki Y."/>
            <person name="Orlando V."/>
            <person name="Pang K.C."/>
            <person name="Pavan W.J."/>
            <person name="Pavesi G."/>
            <person name="Pesole G."/>
            <person name="Petrovsky N."/>
            <person name="Piazza S."/>
            <person name="Reed J."/>
            <person name="Reid J.F."/>
            <person name="Ring B.Z."/>
            <person name="Ringwald M."/>
            <person name="Rost B."/>
            <person name="Ruan Y."/>
            <person name="Salzberg S.L."/>
            <person name="Sandelin A."/>
            <person name="Schneider C."/>
            <person name="Schoenbach C."/>
            <person name="Sekiguchi K."/>
            <person name="Semple C.A."/>
            <person name="Seno S."/>
            <person name="Sessa L."/>
            <person name="Sheng Y."/>
            <person name="Shibata Y."/>
            <person name="Shimada H."/>
            <person name="Shimada K."/>
            <person name="Silva D."/>
            <person name="Sinclair B."/>
            <person name="Sperling S."/>
            <person name="Stupka E."/>
            <person name="Sugiura K."/>
            <person name="Sultana R."/>
            <person name="Takenaka Y."/>
            <person name="Taki K."/>
            <person name="Tammoja K."/>
            <person name="Tan S.L."/>
            <person name="Tang S."/>
            <person name="Taylor M.S."/>
            <person name="Tegner J."/>
            <person name="Teichmann S.A."/>
            <person name="Ueda H.R."/>
            <person name="van Nimwegen E."/>
            <person name="Verardo R."/>
            <person name="Wei C.L."/>
            <person name="Yagi K."/>
            <person name="Yamanishi H."/>
            <person name="Zabarovsky E."/>
            <person name="Zhu S."/>
            <person name="Zimmer A."/>
            <person name="Hide W."/>
            <person name="Bult C."/>
            <person name="Grimmond S.M."/>
            <person name="Teasdale R.D."/>
            <person name="Liu E.T."/>
            <person name="Brusic V."/>
            <person name="Quackenbush J."/>
            <person name="Wahlestedt C."/>
            <person name="Mattick J.S."/>
            <person name="Hume D.A."/>
            <person name="Kai C."/>
            <person name="Sasaki D."/>
            <person name="Tomaru Y."/>
            <person name="Fukuda S."/>
            <person name="Kanamori-Katayama M."/>
            <person name="Suzuki M."/>
            <person name="Aoki J."/>
            <person name="Arakawa T."/>
            <person name="Iida J."/>
            <person name="Imamura K."/>
            <person name="Itoh M."/>
            <person name="Kato T."/>
            <person name="Kawaji H."/>
            <person name="Kawagashira N."/>
            <person name="Kawashima T."/>
            <person name="Kojima M."/>
            <person name="Kondo S."/>
            <person name="Konno H."/>
            <person name="Nakano K."/>
            <person name="Ninomiya N."/>
            <person name="Nishio T."/>
            <person name="Okada M."/>
            <person name="Plessy C."/>
            <person name="Shibata K."/>
            <person name="Shiraki T."/>
            <person name="Suzuki S."/>
            <person name="Tagami M."/>
            <person name="Waki K."/>
            <person name="Watahiki A."/>
            <person name="Okamura-Oho Y."/>
            <person name="Suzuki H."/>
            <person name="Kawai J."/>
            <person name="Hayashizaki Y."/>
        </authorList>
    </citation>
    <scope>NUCLEOTIDE SEQUENCE [LARGE SCALE MRNA]</scope>
    <source>
        <strain>C57BL/6J</strain>
        <tissue>Bone</tissue>
    </source>
</reference>
<reference key="2">
    <citation type="journal article" date="2007" name="Gene">
        <title>FBXO40, a gene encoding a novel muscle-specific F-box protein, is upregulated in denervation-related muscle atrophy.</title>
        <authorList>
            <person name="Ye J."/>
            <person name="Zhang Y."/>
            <person name="Xu J."/>
            <person name="Zhang Q."/>
            <person name="Zhu D."/>
        </authorList>
    </citation>
    <scope>FUNCTION</scope>
    <scope>TISSUE SPECIFICITY</scope>
    <scope>DEVELOPMENTAL STAGE</scope>
    <scope>SUBCELLULAR LOCATION</scope>
</reference>
<reference key="3">
    <citation type="journal article" date="2010" name="Cell">
        <title>A tissue-specific atlas of mouse protein phosphorylation and expression.</title>
        <authorList>
            <person name="Huttlin E.L."/>
            <person name="Jedrychowski M.P."/>
            <person name="Elias J.E."/>
            <person name="Goswami T."/>
            <person name="Rad R."/>
            <person name="Beausoleil S.A."/>
            <person name="Villen J."/>
            <person name="Haas W."/>
            <person name="Sowa M.E."/>
            <person name="Gygi S.P."/>
        </authorList>
    </citation>
    <scope>IDENTIFICATION BY MASS SPECTROMETRY [LARGE SCALE ANALYSIS]</scope>
    <source>
        <tissue>Heart</tissue>
    </source>
</reference>
<dbReference type="EMBL" id="AK036385">
    <property type="status" value="NOT_ANNOTATED_CDS"/>
    <property type="molecule type" value="mRNA"/>
</dbReference>
<dbReference type="CCDS" id="CCDS37337.1"/>
<dbReference type="RefSeq" id="NP_001032398.1">
    <property type="nucleotide sequence ID" value="NM_001037321.2"/>
</dbReference>
<dbReference type="RefSeq" id="NP_001345146.1">
    <property type="nucleotide sequence ID" value="NM_001358217.1"/>
</dbReference>
<dbReference type="RefSeq" id="XP_006521944.1">
    <property type="nucleotide sequence ID" value="XM_006521881.2"/>
</dbReference>
<dbReference type="RefSeq" id="XP_006521945.1">
    <property type="nucleotide sequence ID" value="XM_006521882.4"/>
</dbReference>
<dbReference type="SMR" id="P62932"/>
<dbReference type="BioGRID" id="228886">
    <property type="interactions" value="4"/>
</dbReference>
<dbReference type="FunCoup" id="P62932">
    <property type="interactions" value="495"/>
</dbReference>
<dbReference type="STRING" id="10090.ENSMUSP00000075266"/>
<dbReference type="GlyGen" id="P62932">
    <property type="glycosylation" value="1 site, 1 O-linked glycan (1 site)"/>
</dbReference>
<dbReference type="iPTMnet" id="P62932"/>
<dbReference type="PhosphoSitePlus" id="P62932"/>
<dbReference type="PaxDb" id="10090-ENSMUSP00000075266"/>
<dbReference type="PeptideAtlas" id="P62932"/>
<dbReference type="ProteomicsDB" id="271885"/>
<dbReference type="Antibodypedia" id="1237">
    <property type="antibodies" value="117 antibodies from 19 providers"/>
</dbReference>
<dbReference type="Ensembl" id="ENSMUST00000075869.13">
    <property type="protein sequence ID" value="ENSMUSP00000075266.7"/>
    <property type="gene ID" value="ENSMUSG00000047746.15"/>
</dbReference>
<dbReference type="Ensembl" id="ENSMUST00000114806.2">
    <property type="protein sequence ID" value="ENSMUSP00000110454.2"/>
    <property type="gene ID" value="ENSMUSG00000047746.15"/>
</dbReference>
<dbReference type="GeneID" id="207215"/>
<dbReference type="KEGG" id="mmu:207215"/>
<dbReference type="UCSC" id="uc007zdj.1">
    <property type="organism name" value="mouse"/>
</dbReference>
<dbReference type="AGR" id="MGI:2443753"/>
<dbReference type="CTD" id="51725"/>
<dbReference type="MGI" id="MGI:2443753">
    <property type="gene designation" value="Fbxo40"/>
</dbReference>
<dbReference type="VEuPathDB" id="HostDB:ENSMUSG00000047746"/>
<dbReference type="eggNOG" id="ENOG502QVHX">
    <property type="taxonomic scope" value="Eukaryota"/>
</dbReference>
<dbReference type="GeneTree" id="ENSGT00950000183204"/>
<dbReference type="HOGENOM" id="CLU_013357_0_0_1"/>
<dbReference type="InParanoid" id="P62932"/>
<dbReference type="OMA" id="EVHISEY"/>
<dbReference type="OrthoDB" id="5918172at2759"/>
<dbReference type="PhylomeDB" id="P62932"/>
<dbReference type="TreeFam" id="TF343227"/>
<dbReference type="Reactome" id="R-MMU-8951664">
    <property type="pathway name" value="Neddylation"/>
</dbReference>
<dbReference type="Reactome" id="R-MMU-983168">
    <property type="pathway name" value="Antigen processing: Ubiquitination &amp; Proteasome degradation"/>
</dbReference>
<dbReference type="BioGRID-ORCS" id="207215">
    <property type="hits" value="6 hits in 77 CRISPR screens"/>
</dbReference>
<dbReference type="ChiTaRS" id="Fbxo40">
    <property type="organism name" value="mouse"/>
</dbReference>
<dbReference type="PRO" id="PR:P62932"/>
<dbReference type="Proteomes" id="UP000000589">
    <property type="component" value="Chromosome 16"/>
</dbReference>
<dbReference type="RNAct" id="P62932">
    <property type="molecule type" value="protein"/>
</dbReference>
<dbReference type="Bgee" id="ENSMUSG00000047746">
    <property type="expression patterns" value="Expressed in hindlimb stylopod muscle and 30 other cell types or tissues"/>
</dbReference>
<dbReference type="ExpressionAtlas" id="P62932">
    <property type="expression patterns" value="baseline and differential"/>
</dbReference>
<dbReference type="GO" id="GO:0005737">
    <property type="term" value="C:cytoplasm"/>
    <property type="evidence" value="ECO:0000314"/>
    <property type="project" value="UniProtKB"/>
</dbReference>
<dbReference type="GO" id="GO:0061630">
    <property type="term" value="F:ubiquitin protein ligase activity"/>
    <property type="evidence" value="ECO:0007669"/>
    <property type="project" value="InterPro"/>
</dbReference>
<dbReference type="GO" id="GO:0008270">
    <property type="term" value="F:zinc ion binding"/>
    <property type="evidence" value="ECO:0007669"/>
    <property type="project" value="UniProtKB-KW"/>
</dbReference>
<dbReference type="GO" id="GO:0042692">
    <property type="term" value="P:muscle cell differentiation"/>
    <property type="evidence" value="ECO:0000270"/>
    <property type="project" value="UniProtKB"/>
</dbReference>
<dbReference type="Gene3D" id="3.30.40.150">
    <property type="entry name" value="TRAF-like zinc-finger, N-terminal subdomain"/>
    <property type="match status" value="1"/>
</dbReference>
<dbReference type="Gene3D" id="3.30.40.10">
    <property type="entry name" value="Zinc/RING finger domain, C3HC4 (zinc finger)"/>
    <property type="match status" value="1"/>
</dbReference>
<dbReference type="InterPro" id="IPR036047">
    <property type="entry name" value="F-box-like_dom_sf"/>
</dbReference>
<dbReference type="InterPro" id="IPR001810">
    <property type="entry name" value="F-box_dom"/>
</dbReference>
<dbReference type="InterPro" id="IPR031890">
    <property type="entry name" value="Fbxo30/Fbxo40"/>
</dbReference>
<dbReference type="InterPro" id="IPR013083">
    <property type="entry name" value="Znf_RING/FYVE/PHD"/>
</dbReference>
<dbReference type="InterPro" id="IPR001293">
    <property type="entry name" value="Znf_TRAF"/>
</dbReference>
<dbReference type="InterPro" id="IPR043013">
    <property type="entry name" value="Znf_TRAF_N"/>
</dbReference>
<dbReference type="PANTHER" id="PTHR15933:SF1">
    <property type="entry name" value="F-BOX ONLY PROTEIN 40"/>
    <property type="match status" value="1"/>
</dbReference>
<dbReference type="PANTHER" id="PTHR15933">
    <property type="entry name" value="PROTEIN CBG16327"/>
    <property type="match status" value="1"/>
</dbReference>
<dbReference type="Pfam" id="PF15966">
    <property type="entry name" value="F-box_4"/>
    <property type="match status" value="1"/>
</dbReference>
<dbReference type="Pfam" id="PF15965">
    <property type="entry name" value="zf-TRAF_2"/>
    <property type="match status" value="1"/>
</dbReference>
<dbReference type="SUPFAM" id="SSF81383">
    <property type="entry name" value="F-box domain"/>
    <property type="match status" value="1"/>
</dbReference>
<dbReference type="SUPFAM" id="SSF49599">
    <property type="entry name" value="TRAF domain-like"/>
    <property type="match status" value="1"/>
</dbReference>
<dbReference type="PROSITE" id="PS50181">
    <property type="entry name" value="FBOX"/>
    <property type="match status" value="1"/>
</dbReference>
<dbReference type="PROSITE" id="PS50145">
    <property type="entry name" value="ZF_TRAF"/>
    <property type="match status" value="1"/>
</dbReference>
<keyword id="KW-0963">Cytoplasm</keyword>
<keyword id="KW-0479">Metal-binding</keyword>
<keyword id="KW-1185">Reference proteome</keyword>
<keyword id="KW-0833">Ubl conjugation pathway</keyword>
<keyword id="KW-0862">Zinc</keyword>
<keyword id="KW-0863">Zinc-finger</keyword>
<gene>
    <name type="primary">Fbxo40</name>
</gene>